<organism>
    <name type="scientific">Shigella sonnei (strain Ss046)</name>
    <dbReference type="NCBI Taxonomy" id="300269"/>
    <lineage>
        <taxon>Bacteria</taxon>
        <taxon>Pseudomonadati</taxon>
        <taxon>Pseudomonadota</taxon>
        <taxon>Gammaproteobacteria</taxon>
        <taxon>Enterobacterales</taxon>
        <taxon>Enterobacteriaceae</taxon>
        <taxon>Shigella</taxon>
    </lineage>
</organism>
<gene>
    <name evidence="1" type="primary">yraN</name>
    <name type="ordered locus">SSON_3294</name>
</gene>
<protein>
    <recommendedName>
        <fullName evidence="1">UPF0102 protein YraN</fullName>
    </recommendedName>
</protein>
<feature type="chain" id="PRO_1000009269" description="UPF0102 protein YraN">
    <location>
        <begin position="1"/>
        <end position="131"/>
    </location>
</feature>
<feature type="region of interest" description="Disordered" evidence="2">
    <location>
        <begin position="1"/>
        <end position="21"/>
    </location>
</feature>
<feature type="compositionally biased region" description="Polar residues" evidence="2">
    <location>
        <begin position="1"/>
        <end position="19"/>
    </location>
</feature>
<keyword id="KW-1185">Reference proteome</keyword>
<reference key="1">
    <citation type="journal article" date="2005" name="Nucleic Acids Res.">
        <title>Genome dynamics and diversity of Shigella species, the etiologic agents of bacillary dysentery.</title>
        <authorList>
            <person name="Yang F."/>
            <person name="Yang J."/>
            <person name="Zhang X."/>
            <person name="Chen L."/>
            <person name="Jiang Y."/>
            <person name="Yan Y."/>
            <person name="Tang X."/>
            <person name="Wang J."/>
            <person name="Xiong Z."/>
            <person name="Dong J."/>
            <person name="Xue Y."/>
            <person name="Zhu Y."/>
            <person name="Xu X."/>
            <person name="Sun L."/>
            <person name="Chen S."/>
            <person name="Nie H."/>
            <person name="Peng J."/>
            <person name="Xu J."/>
            <person name="Wang Y."/>
            <person name="Yuan Z."/>
            <person name="Wen Y."/>
            <person name="Yao Z."/>
            <person name="Shen Y."/>
            <person name="Qiang B."/>
            <person name="Hou Y."/>
            <person name="Yu J."/>
            <person name="Jin Q."/>
        </authorList>
    </citation>
    <scope>NUCLEOTIDE SEQUENCE [LARGE SCALE GENOMIC DNA]</scope>
    <source>
        <strain>Ss046</strain>
    </source>
</reference>
<accession>Q3YX93</accession>
<proteinExistence type="inferred from homology"/>
<name>YRAN_SHISS</name>
<sequence>MATVPTRSGSPRQLTTKQTGDAWEAQARRWLEGKGLRFIAANVNERGGEIDLIMREGRTTVFVEVRYRRSALYGGAAASVTRSKQHKLLQTARLWLARHNGSFDTVDCRFDVVAFTGNEVEWIKDAFNDHS</sequence>
<dbReference type="EMBL" id="CP000038">
    <property type="protein sequence ID" value="AAZ89869.1"/>
    <property type="molecule type" value="Genomic_DNA"/>
</dbReference>
<dbReference type="RefSeq" id="WP_000246837.1">
    <property type="nucleotide sequence ID" value="NC_007384.1"/>
</dbReference>
<dbReference type="SMR" id="Q3YX93"/>
<dbReference type="KEGG" id="ssn:SSON_3294"/>
<dbReference type="HOGENOM" id="CLU_115353_1_0_6"/>
<dbReference type="Proteomes" id="UP000002529">
    <property type="component" value="Chromosome"/>
</dbReference>
<dbReference type="GO" id="GO:0003676">
    <property type="term" value="F:nucleic acid binding"/>
    <property type="evidence" value="ECO:0007669"/>
    <property type="project" value="InterPro"/>
</dbReference>
<dbReference type="CDD" id="cd20736">
    <property type="entry name" value="PoNe_Nuclease"/>
    <property type="match status" value="1"/>
</dbReference>
<dbReference type="Gene3D" id="3.40.1350.10">
    <property type="match status" value="1"/>
</dbReference>
<dbReference type="HAMAP" id="MF_00048">
    <property type="entry name" value="UPF0102"/>
    <property type="match status" value="1"/>
</dbReference>
<dbReference type="InterPro" id="IPR011335">
    <property type="entry name" value="Restrct_endonuc-II-like"/>
</dbReference>
<dbReference type="InterPro" id="IPR011856">
    <property type="entry name" value="tRNA_endonuc-like_dom_sf"/>
</dbReference>
<dbReference type="InterPro" id="IPR003509">
    <property type="entry name" value="UPF0102_YraN-like"/>
</dbReference>
<dbReference type="NCBIfam" id="NF009150">
    <property type="entry name" value="PRK12497.1-3"/>
    <property type="match status" value="1"/>
</dbReference>
<dbReference type="NCBIfam" id="TIGR00252">
    <property type="entry name" value="YraN family protein"/>
    <property type="match status" value="1"/>
</dbReference>
<dbReference type="PANTHER" id="PTHR34039">
    <property type="entry name" value="UPF0102 PROTEIN YRAN"/>
    <property type="match status" value="1"/>
</dbReference>
<dbReference type="PANTHER" id="PTHR34039:SF1">
    <property type="entry name" value="UPF0102 PROTEIN YRAN"/>
    <property type="match status" value="1"/>
</dbReference>
<dbReference type="Pfam" id="PF02021">
    <property type="entry name" value="UPF0102"/>
    <property type="match status" value="1"/>
</dbReference>
<dbReference type="SUPFAM" id="SSF52980">
    <property type="entry name" value="Restriction endonuclease-like"/>
    <property type="match status" value="1"/>
</dbReference>
<evidence type="ECO:0000255" key="1">
    <source>
        <dbReference type="HAMAP-Rule" id="MF_00048"/>
    </source>
</evidence>
<evidence type="ECO:0000256" key="2">
    <source>
        <dbReference type="SAM" id="MobiDB-lite"/>
    </source>
</evidence>
<comment type="similarity">
    <text evidence="1">Belongs to the UPF0102 family.</text>
</comment>